<keyword id="KW-0007">Acetylation</keyword>
<keyword id="KW-0024">Alternative initiation</keyword>
<keyword id="KW-0963">Cytoplasm</keyword>
<keyword id="KW-0903">Direct protein sequencing</keyword>
<keyword id="KW-1017">Isopeptide bond</keyword>
<keyword id="KW-0944">Nitration</keyword>
<keyword id="KW-0597">Phosphoprotein</keyword>
<keyword id="KW-1185">Reference proteome</keyword>
<keyword id="KW-0832">Ubl conjugation</keyword>
<protein>
    <recommendedName>
        <fullName>14-3-3 protein beta/alpha</fullName>
    </recommendedName>
    <alternativeName>
        <fullName>Prepronerve growth factor RNH-1</fullName>
    </alternativeName>
    <alternativeName>
        <fullName>Protein kinase C inhibitor protein 1</fullName>
        <shortName>KCIP-1</shortName>
    </alternativeName>
    <component>
        <recommendedName>
            <fullName>14-3-3 protein beta/alpha, N-terminally processed</fullName>
        </recommendedName>
    </component>
</protein>
<gene>
    <name type="primary">Ywhab</name>
</gene>
<evidence type="ECO:0000250" key="1"/>
<evidence type="ECO:0000250" key="2">
    <source>
        <dbReference type="UniProtKB" id="P27348"/>
    </source>
</evidence>
<evidence type="ECO:0000250" key="3">
    <source>
        <dbReference type="UniProtKB" id="P31946"/>
    </source>
</evidence>
<evidence type="ECO:0000250" key="4">
    <source>
        <dbReference type="UniProtKB" id="P68251"/>
    </source>
</evidence>
<evidence type="ECO:0000250" key="5">
    <source>
        <dbReference type="UniProtKB" id="Q9CQV8"/>
    </source>
</evidence>
<evidence type="ECO:0000269" key="6">
    <source>
    </source>
</evidence>
<evidence type="ECO:0000269" key="7">
    <source>
    </source>
</evidence>
<evidence type="ECO:0000305" key="8"/>
<accession>P35213</accession>
<dbReference type="EMBL" id="D17446">
    <property type="protein sequence ID" value="BAA04260.1"/>
    <property type="molecule type" value="mRNA"/>
</dbReference>
<dbReference type="EMBL" id="S55223">
    <property type="protein sequence ID" value="AAA13843.1"/>
    <property type="molecule type" value="mRNA"/>
</dbReference>
<dbReference type="EMBL" id="S83440">
    <property type="protein sequence ID" value="AAB50874.1"/>
    <property type="molecule type" value="mRNA"/>
</dbReference>
<dbReference type="EMBL" id="BC076502">
    <property type="protein sequence ID" value="AAH76502.1"/>
    <property type="molecule type" value="mRNA"/>
</dbReference>
<dbReference type="PIR" id="A49023">
    <property type="entry name" value="A49023"/>
</dbReference>
<dbReference type="RefSeq" id="NP_062250.1">
    <molecule id="P35213-1"/>
    <property type="nucleotide sequence ID" value="NM_019377.2"/>
</dbReference>
<dbReference type="SMR" id="P35213"/>
<dbReference type="BioGRID" id="248554">
    <property type="interactions" value="8"/>
</dbReference>
<dbReference type="FunCoup" id="P35213">
    <property type="interactions" value="4000"/>
</dbReference>
<dbReference type="IntAct" id="P35213">
    <property type="interactions" value="7"/>
</dbReference>
<dbReference type="MINT" id="P35213"/>
<dbReference type="STRING" id="10116.ENSRNOP00000016981"/>
<dbReference type="GlyGen" id="P35213">
    <property type="glycosylation" value="1 site, 1 O-linked glycan (1 site)"/>
</dbReference>
<dbReference type="iPTMnet" id="P35213"/>
<dbReference type="PhosphoSitePlus" id="P35213"/>
<dbReference type="SwissPalm" id="P35213"/>
<dbReference type="jPOST" id="P35213"/>
<dbReference type="PaxDb" id="10116-ENSRNOP00000016981"/>
<dbReference type="Ensembl" id="ENSRNOT00000016981.7">
    <molecule id="P35213-1"/>
    <property type="protein sequence ID" value="ENSRNOP00000016981.4"/>
    <property type="gene ID" value="ENSRNOG00000010945.7"/>
</dbReference>
<dbReference type="GeneID" id="56011"/>
<dbReference type="KEGG" id="rno:56011"/>
<dbReference type="UCSC" id="RGD:61998">
    <molecule id="P35213-1"/>
    <property type="organism name" value="rat"/>
</dbReference>
<dbReference type="AGR" id="RGD:61998"/>
<dbReference type="CTD" id="7529"/>
<dbReference type="RGD" id="61998">
    <property type="gene designation" value="Ywhab"/>
</dbReference>
<dbReference type="eggNOG" id="KOG0841">
    <property type="taxonomic scope" value="Eukaryota"/>
</dbReference>
<dbReference type="GeneTree" id="ENSGT01090000260040"/>
<dbReference type="HOGENOM" id="CLU_058290_1_0_1"/>
<dbReference type="InParanoid" id="P35213"/>
<dbReference type="OMA" id="AECKVFY"/>
<dbReference type="OrthoDB" id="10260625at2759"/>
<dbReference type="PhylomeDB" id="P35213"/>
<dbReference type="TreeFam" id="TF102003"/>
<dbReference type="Reactome" id="R-RNO-111447">
    <property type="pathway name" value="Activation of BAD and translocation to mitochondria"/>
</dbReference>
<dbReference type="Reactome" id="R-RNO-165159">
    <property type="pathway name" value="MTOR signalling"/>
</dbReference>
<dbReference type="Reactome" id="R-RNO-166208">
    <property type="pathway name" value="mTORC1-mediated signalling"/>
</dbReference>
<dbReference type="Reactome" id="R-RNO-170968">
    <property type="pathway name" value="Frs2-mediated activation"/>
</dbReference>
<dbReference type="Reactome" id="R-RNO-2028269">
    <property type="pathway name" value="Signaling by Hippo"/>
</dbReference>
<dbReference type="Reactome" id="R-RNO-392517">
    <property type="pathway name" value="Rap1 signalling"/>
</dbReference>
<dbReference type="Reactome" id="R-RNO-450385">
    <property type="pathway name" value="Butyrate Response Factor 1 (BRF1) binds and destabilizes mRNA"/>
</dbReference>
<dbReference type="Reactome" id="R-RNO-450513">
    <property type="pathway name" value="Tristetraprolin (TTP, ZFP36) binds and destabilizes mRNA"/>
</dbReference>
<dbReference type="Reactome" id="R-RNO-5625740">
    <property type="pathway name" value="RHO GTPases activate PKNs"/>
</dbReference>
<dbReference type="Reactome" id="R-RNO-5628897">
    <property type="pathway name" value="TP53 Regulates Metabolic Genes"/>
</dbReference>
<dbReference type="Reactome" id="R-RNO-5673000">
    <property type="pathway name" value="RAF activation"/>
</dbReference>
<dbReference type="Reactome" id="R-RNO-5674135">
    <property type="pathway name" value="MAP2K and MAPK activation"/>
</dbReference>
<dbReference type="Reactome" id="R-RNO-5675221">
    <property type="pathway name" value="Negative regulation of MAPK pathway"/>
</dbReference>
<dbReference type="Reactome" id="R-RNO-75035">
    <property type="pathway name" value="Chk1/Chk2(Cds1) mediated inactivation of Cyclin B:Cdk1 complex"/>
</dbReference>
<dbReference type="Reactome" id="R-RNO-9614399">
    <property type="pathway name" value="Regulation of localization of FOXO transcription factors"/>
</dbReference>
<dbReference type="PRO" id="PR:P35213"/>
<dbReference type="Proteomes" id="UP000002494">
    <property type="component" value="Chromosome 3"/>
</dbReference>
<dbReference type="Bgee" id="ENSRNOG00000010945">
    <property type="expression patterns" value="Expressed in Ammon's horn and 20 other cell types or tissues"/>
</dbReference>
<dbReference type="GO" id="GO:0005737">
    <property type="term" value="C:cytoplasm"/>
    <property type="evidence" value="ECO:0000266"/>
    <property type="project" value="RGD"/>
</dbReference>
<dbReference type="GO" id="GO:0005829">
    <property type="term" value="C:cytosol"/>
    <property type="evidence" value="ECO:0000266"/>
    <property type="project" value="RGD"/>
</dbReference>
<dbReference type="GO" id="GO:0042470">
    <property type="term" value="C:melanosome"/>
    <property type="evidence" value="ECO:0007669"/>
    <property type="project" value="UniProtKB-SubCell"/>
</dbReference>
<dbReference type="GO" id="GO:0005634">
    <property type="term" value="C:nucleus"/>
    <property type="evidence" value="ECO:0000266"/>
    <property type="project" value="RGD"/>
</dbReference>
<dbReference type="GO" id="GO:0048471">
    <property type="term" value="C:perinuclear region of cytoplasm"/>
    <property type="evidence" value="ECO:0000266"/>
    <property type="project" value="RGD"/>
</dbReference>
<dbReference type="GO" id="GO:0032991">
    <property type="term" value="C:protein-containing complex"/>
    <property type="evidence" value="ECO:0000314"/>
    <property type="project" value="RGD"/>
</dbReference>
<dbReference type="GO" id="GO:0017053">
    <property type="term" value="C:transcription repressor complex"/>
    <property type="evidence" value="ECO:0000314"/>
    <property type="project" value="RGD"/>
</dbReference>
<dbReference type="GO" id="GO:0019899">
    <property type="term" value="F:enzyme binding"/>
    <property type="evidence" value="ECO:0000266"/>
    <property type="project" value="RGD"/>
</dbReference>
<dbReference type="GO" id="GO:0042826">
    <property type="term" value="F:histone deacetylase binding"/>
    <property type="evidence" value="ECO:0000266"/>
    <property type="project" value="RGD"/>
</dbReference>
<dbReference type="GO" id="GO:0042802">
    <property type="term" value="F:identical protein binding"/>
    <property type="evidence" value="ECO:0000266"/>
    <property type="project" value="RGD"/>
</dbReference>
<dbReference type="GO" id="GO:0051219">
    <property type="term" value="F:phosphoprotein binding"/>
    <property type="evidence" value="ECO:0000266"/>
    <property type="project" value="RGD"/>
</dbReference>
<dbReference type="GO" id="GO:0050815">
    <property type="term" value="F:phosphoserine residue binding"/>
    <property type="evidence" value="ECO:0000266"/>
    <property type="project" value="RGD"/>
</dbReference>
<dbReference type="GO" id="GO:0019904">
    <property type="term" value="F:protein domain specific binding"/>
    <property type="evidence" value="ECO:0000266"/>
    <property type="project" value="RGD"/>
</dbReference>
<dbReference type="GO" id="GO:0004860">
    <property type="term" value="F:protein kinase inhibitor activity"/>
    <property type="evidence" value="ECO:0000250"/>
    <property type="project" value="UniProtKB"/>
</dbReference>
<dbReference type="GO" id="GO:0004864">
    <property type="term" value="F:protein phosphatase inhibitor activity"/>
    <property type="evidence" value="ECO:0000266"/>
    <property type="project" value="RGD"/>
</dbReference>
<dbReference type="GO" id="GO:0140311">
    <property type="term" value="F:protein sequestering activity"/>
    <property type="evidence" value="ECO:0000266"/>
    <property type="project" value="RGD"/>
</dbReference>
<dbReference type="GO" id="GO:0044877">
    <property type="term" value="F:protein-containing complex binding"/>
    <property type="evidence" value="ECO:0000353"/>
    <property type="project" value="RGD"/>
</dbReference>
<dbReference type="GO" id="GO:0045892">
    <property type="term" value="P:negative regulation of DNA-templated transcription"/>
    <property type="evidence" value="ECO:0000315"/>
    <property type="project" value="RGD"/>
</dbReference>
<dbReference type="GO" id="GO:0045744">
    <property type="term" value="P:negative regulation of G protein-coupled receptor signaling pathway"/>
    <property type="evidence" value="ECO:0000250"/>
    <property type="project" value="UniProtKB"/>
</dbReference>
<dbReference type="GO" id="GO:0042308">
    <property type="term" value="P:negative regulation of protein import into nucleus"/>
    <property type="evidence" value="ECO:0000266"/>
    <property type="project" value="RGD"/>
</dbReference>
<dbReference type="GO" id="GO:0045944">
    <property type="term" value="P:positive regulation of transcription by RNA polymerase II"/>
    <property type="evidence" value="ECO:0000266"/>
    <property type="project" value="RGD"/>
</dbReference>
<dbReference type="GO" id="GO:0008104">
    <property type="term" value="P:protein localization"/>
    <property type="evidence" value="ECO:0000318"/>
    <property type="project" value="GO_Central"/>
</dbReference>
<dbReference type="GO" id="GO:0006605">
    <property type="term" value="P:protein targeting"/>
    <property type="evidence" value="ECO:0000266"/>
    <property type="project" value="RGD"/>
</dbReference>
<dbReference type="GO" id="GO:0007165">
    <property type="term" value="P:signal transduction"/>
    <property type="evidence" value="ECO:0000318"/>
    <property type="project" value="GO_Central"/>
</dbReference>
<dbReference type="FunFam" id="1.20.190.20:FF:000001">
    <property type="entry name" value="14-3-3 gamma 1"/>
    <property type="match status" value="1"/>
</dbReference>
<dbReference type="Gene3D" id="1.20.190.20">
    <property type="entry name" value="14-3-3 domain"/>
    <property type="match status" value="1"/>
</dbReference>
<dbReference type="InterPro" id="IPR000308">
    <property type="entry name" value="14-3-3"/>
</dbReference>
<dbReference type="InterPro" id="IPR023409">
    <property type="entry name" value="14-3-3_CS"/>
</dbReference>
<dbReference type="InterPro" id="IPR036815">
    <property type="entry name" value="14-3-3_dom_sf"/>
</dbReference>
<dbReference type="InterPro" id="IPR023410">
    <property type="entry name" value="14-3-3_domain"/>
</dbReference>
<dbReference type="PANTHER" id="PTHR18860">
    <property type="entry name" value="14-3-3 PROTEIN"/>
    <property type="match status" value="1"/>
</dbReference>
<dbReference type="Pfam" id="PF00244">
    <property type="entry name" value="14-3-3"/>
    <property type="match status" value="1"/>
</dbReference>
<dbReference type="PIRSF" id="PIRSF000868">
    <property type="entry name" value="14-3-3"/>
    <property type="match status" value="1"/>
</dbReference>
<dbReference type="PRINTS" id="PR00305">
    <property type="entry name" value="1433ZETA"/>
</dbReference>
<dbReference type="SMART" id="SM00101">
    <property type="entry name" value="14_3_3"/>
    <property type="match status" value="1"/>
</dbReference>
<dbReference type="SUPFAM" id="SSF48445">
    <property type="entry name" value="14-3-3 protein"/>
    <property type="match status" value="1"/>
</dbReference>
<dbReference type="PROSITE" id="PS00796">
    <property type="entry name" value="1433_1"/>
    <property type="match status" value="1"/>
</dbReference>
<dbReference type="PROSITE" id="PS00797">
    <property type="entry name" value="1433_2"/>
    <property type="match status" value="1"/>
</dbReference>
<sequence length="246" mass="28054">MTMDKSELVQKAKLAEQAERYDDMAAAMKAVTEQGHELSNEERNLLSVAYKNVVGARRSSWRVISSIEQKTERNEKKQQMGKEYREKIEAELQDICSDVLELLDKYLILNATHAESKVFYLKMKGDYFRYLSEVASGDNKQTTVSNSQQAYQEAFEISKKEMQPTHPIRLGLALNFSVFYYEILNSPEKACSLAKTAFDEAIAELDTLNEESYKDSTLIMQLLRDNLTLWTSENQGDEGDAGEGEN</sequence>
<reference key="1">
    <citation type="journal article" date="1993" name="Brain Res. Mol. Brain Res.">
        <title>Molecular cloning of rat cDNAs for beta and gamma subtypes of 14-3-3 protein and developmental changes in expression of their mRNAs in the nervous system.</title>
        <authorList>
            <person name="Watanabe M."/>
            <person name="Isobe T."/>
            <person name="Ichimura T."/>
            <person name="Kuwano R."/>
            <person name="Takahashi Y."/>
            <person name="Kondo H."/>
        </authorList>
    </citation>
    <scope>NUCLEOTIDE SEQUENCE [MRNA]</scope>
    <source>
        <strain>Wistar</strain>
        <tissue>Brain</tissue>
    </source>
</reference>
<reference key="2">
    <citation type="journal article" date="1995" name="J. Biochem.">
        <title>Function of RNH-1/14-3-3 beta gene in cellular differentiation and proliferation.</title>
        <authorList>
            <person name="Takai R."/>
            <person name="Tanaka E."/>
            <person name="Miyazaki T."/>
            <person name="Suda M."/>
            <person name="Tashiro F."/>
        </authorList>
    </citation>
    <scope>NUCLEOTIDE SEQUENCE [MRNA]</scope>
    <source>
        <tissue>Brain</tissue>
    </source>
</reference>
<reference key="3">
    <citation type="journal article" date="2004" name="Genome Res.">
        <title>The status, quality, and expansion of the NIH full-length cDNA project: the Mammalian Gene Collection (MGC).</title>
        <authorList>
            <consortium name="The MGC Project Team"/>
        </authorList>
    </citation>
    <scope>NUCLEOTIDE SEQUENCE [LARGE SCALE MRNA]</scope>
    <source>
        <tissue>Lung</tissue>
    </source>
</reference>
<reference key="4">
    <citation type="submission" date="2009-01" db="UniProtKB">
        <authorList>
            <person name="Lubec G."/>
            <person name="Kang S.U."/>
            <person name="Chen W.-Q."/>
        </authorList>
    </citation>
    <scope>PROTEIN SEQUENCE OF 14-57; 63-70; 86-117; 130-159; 161-189 AND 196-224</scope>
    <scope>IDENTIFICATION BY MASS SPECTROMETRY</scope>
    <source>
        <strain>Sprague-Dawley</strain>
        <tissue>Brain</tissue>
        <tissue>Hippocampus</tissue>
    </source>
</reference>
<reference key="5">
    <citation type="journal article" date="2001" name="Proc. Natl. Acad. Sci. U.S.A.">
        <title>Role of a pineal cAMP-operated arylalkylamine N-acetyltransferase/14-3-3-binding switch in melatonin synthesis.</title>
        <authorList>
            <person name="Ganguly S."/>
            <person name="Gastel J.A."/>
            <person name="Weller J.L."/>
            <person name="Schwartz C."/>
            <person name="Jaffe H."/>
            <person name="Namboodiri M.A."/>
            <person name="Coon S.L."/>
            <person name="Hickman A.B."/>
            <person name="Rollag M."/>
            <person name="Obsil T."/>
            <person name="Beauverger P."/>
            <person name="Ferry G."/>
            <person name="Boutin J.A."/>
            <person name="Klein D.C."/>
        </authorList>
    </citation>
    <scope>PROTEIN SEQUENCE OF 30-43</scope>
    <scope>INTERACTION WITH AANAT</scope>
    <scope>IDENTIFICATION BY MASS SPECTROMETRY</scope>
</reference>
<reference key="6">
    <citation type="journal article" date="2001" name="J. Biol. Chem.">
        <title>Binding of 14-3-3beta regulates the kinase activity and subcellular localization of testicular protein kinase 1.</title>
        <authorList>
            <person name="Toshima J.Y."/>
            <person name="Toshima J."/>
            <person name="Watanabe T."/>
            <person name="Mizuno K."/>
        </authorList>
    </citation>
    <scope>INTERACTION WITH TESK1</scope>
</reference>
<feature type="chain" id="PRO_0000000007" description="14-3-3 protein beta/alpha">
    <location>
        <begin position="1"/>
        <end position="246"/>
    </location>
</feature>
<feature type="initiator methionine" description="Removed; alternate" evidence="3">
    <location>
        <position position="1"/>
    </location>
</feature>
<feature type="chain" id="PRO_0000367904" description="14-3-3 protein beta/alpha, N-terminally processed">
    <location>
        <begin position="2"/>
        <end position="246"/>
    </location>
</feature>
<feature type="site" description="Interaction with phosphoserine on interacting protein" evidence="1">
    <location>
        <position position="58"/>
    </location>
</feature>
<feature type="site" description="Interaction with phosphoserine on interacting protein" evidence="1">
    <location>
        <position position="129"/>
    </location>
</feature>
<feature type="modified residue" description="N-acetylmethionine" evidence="3">
    <location>
        <position position="1"/>
    </location>
</feature>
<feature type="modified residue" description="N-acetylthreonine; in 14-3-3 protein beta/alpha, N-terminally processed" evidence="3">
    <location>
        <position position="2"/>
    </location>
</feature>
<feature type="modified residue" description="Phosphothreonine" evidence="3">
    <location>
        <position position="2"/>
    </location>
</feature>
<feature type="modified residue" description="N6-acetyllysine" evidence="2">
    <location>
        <position position="5"/>
    </location>
</feature>
<feature type="modified residue" description="N6-acetyllysine; alternate" evidence="2">
    <location>
        <position position="51"/>
    </location>
</feature>
<feature type="modified residue" description="Phosphoserine" evidence="5">
    <location>
        <position position="60"/>
    </location>
</feature>
<feature type="modified residue" description="N6-acetyllysine" evidence="3">
    <location>
        <position position="70"/>
    </location>
</feature>
<feature type="modified residue" description="3'-nitrotyrosine" evidence="5">
    <location>
        <position position="84"/>
    </location>
</feature>
<feature type="modified residue" description="3'-nitrotyrosine" evidence="5">
    <location>
        <position position="106"/>
    </location>
</feature>
<feature type="modified residue" description="N6-acetyllysine" evidence="3">
    <location>
        <position position="117"/>
    </location>
</feature>
<feature type="modified residue" description="Phosphoserine" evidence="4">
    <location>
        <position position="186"/>
    </location>
</feature>
<feature type="modified residue" description="Phosphoserine" evidence="3">
    <location>
        <position position="232"/>
    </location>
</feature>
<feature type="cross-link" description="Glycyl lysine isopeptide (Lys-Gly) (interchain with G-Cter in SUMO2); alternate" evidence="2">
    <location>
        <position position="51"/>
    </location>
</feature>
<feature type="splice variant" id="VSP_018635" description="In isoform Short." evidence="8">
    <location>
        <begin position="1"/>
        <end position="2"/>
    </location>
</feature>
<feature type="modified residue" description="N-acetylmethionine" evidence="8">
    <location sequence="P35213-2">
        <position position="1"/>
    </location>
</feature>
<proteinExistence type="evidence at protein level"/>
<organism>
    <name type="scientific">Rattus norvegicus</name>
    <name type="common">Rat</name>
    <dbReference type="NCBI Taxonomy" id="10116"/>
    <lineage>
        <taxon>Eukaryota</taxon>
        <taxon>Metazoa</taxon>
        <taxon>Chordata</taxon>
        <taxon>Craniata</taxon>
        <taxon>Vertebrata</taxon>
        <taxon>Euteleostomi</taxon>
        <taxon>Mammalia</taxon>
        <taxon>Eutheria</taxon>
        <taxon>Euarchontoglires</taxon>
        <taxon>Glires</taxon>
        <taxon>Rodentia</taxon>
        <taxon>Myomorpha</taxon>
        <taxon>Muroidea</taxon>
        <taxon>Muridae</taxon>
        <taxon>Murinae</taxon>
        <taxon>Rattus</taxon>
    </lineage>
</organism>
<name>1433B_RAT</name>
<comment type="function">
    <text evidence="3">Adapter protein implicated in the regulation of a large spectrum of both general and specialized signaling pathways. Binds to a large number of partners, usually by recognition of a phosphoserine or phosphothreonine motif. Binding generally results in the modulation of the activity of the binding partner. Negative regulator of osteogenesis. Blocks the nuclear translocation of the phosphorylated form (by AKT1) of SRPK2 and antagonizes its stimulatory effect on cyclin D1 expression resulting in blockage of neuronal apoptosis elicited by SRPK2. Negative regulator of signaling cascades that mediate activation of MAP kinases via AKAP13.</text>
</comment>
<comment type="subunit">
    <text evidence="3 5 6 7">Homodimer (By similarity). Interacts with SAMSN1 and PRKCE (By similarity). Interacts with AKAP13. Interacts with SSH1 and TORC2/CRTC2. Interacts with ABL1; the interaction results in cytoplasmic location of ABL1 and inhibition of cABL-mediated apoptosis. Interacts with ROR2 (dimer); the interaction results in phosphorylation of YWHAB on tyrosine residues. Interacts with GAB2. Interacts with YAP1 (phosphorylated form). Interacts with the phosphorylated (by AKT1) form of SRPK2 (By similarity). Interacts with PKA-phosphorylated AANAT (PubMed:11427721). Interacts with MYO1C. Interacts with SIRT2 (By similarity). Interacts with the 'Thr-369' phosphorylated form of DAPK2 (By similarity). Interacts with PI4KB, TBC1D22A and TBC1D22B. Interacts with the 'Ser-1134' and 'Ser-1161' phosphorylated form of SOS1 (By similarity). Interacts (via phosphorylated form) with YWHAB; this interaction occurs in a protein kinase AKT1-dependent manner (By similarity). Interacts with SLITRK1. Interacts with SYNPO2 (phosphorylated form); YWHAB competes with ACTN2 for interaction with SYNPO2 (By similarity). Interacts with RIPOR2 (via phosphorylated form); this interaction occurs in a chemokine-dependent manner and does not compete for binding of RIPOR2 with RHOA nor blocks inhibition of RIPOR2-mediated RHOA activity (By similarity). Interacts with MARK2 and MARK3 (By similarity). Interacts with TESK1; the interaction is dependent on the phosphorylation of TESK1 'Ser-439' and inhibits TESK1 kinase activity (PubMed:11555644). Interacts with MEFV (By similarity). Interacts with HDAC4 (By similarity). Interacts with ADAM22 (via C-terminus) (By similarity).</text>
</comment>
<comment type="subcellular location">
    <subcellularLocation>
        <location evidence="3">Cytoplasm</location>
    </subcellularLocation>
    <subcellularLocation>
        <location evidence="3">Melanosome</location>
    </subcellularLocation>
</comment>
<comment type="alternative products">
    <event type="alternative initiation"/>
    <isoform>
        <id>P35213-1</id>
        <name>Long</name>
        <sequence type="displayed"/>
    </isoform>
    <isoform>
        <id>P35213-2</id>
        <name>Short</name>
        <sequence type="described" ref="VSP_018635"/>
    </isoform>
</comment>
<comment type="PTM">
    <text evidence="1">The alpha, brain-specific form differs from the beta form in being phosphorylated. Phosphorylated on Ser-60 by protein kinase C delta type catalytic subunit in a sphingosine-dependent fashion.</text>
</comment>
<comment type="PTM">
    <text evidence="1">Isoform Short contains a N-acetylmethionine at position 1.</text>
</comment>
<comment type="similarity">
    <text evidence="8">Belongs to the 14-3-3 family.</text>
</comment>